<accession>P9WMV6</accession>
<accession>L0T3X0</accession>
<accession>Q11157</accession>
<dbReference type="EC" id="1.1.-.-"/>
<dbReference type="EMBL" id="AE000516">
    <property type="protein sequence ID" value="AAK44734.1"/>
    <property type="status" value="ALT_FRAME"/>
    <property type="molecule type" value="Genomic_DNA"/>
</dbReference>
<dbReference type="EMBL" id="AE000516">
    <property type="protein sequence ID" value="AAK44735.1"/>
    <property type="status" value="ALT_FRAME"/>
    <property type="molecule type" value="Genomic_DNA"/>
</dbReference>
<dbReference type="PIR" id="G70744">
    <property type="entry name" value="G70744"/>
</dbReference>
<dbReference type="RefSeq" id="WP_003908534.1">
    <property type="nucleotide sequence ID" value="NZ_KK341227.1"/>
</dbReference>
<dbReference type="SMR" id="P9WMV6"/>
<dbReference type="KEGG" id="mtc:MT0511"/>
<dbReference type="KEGG" id="mtc:MT0512"/>
<dbReference type="PATRIC" id="fig|83331.31.peg.541"/>
<dbReference type="HOGENOM" id="CLU_008878_3_0_11"/>
<dbReference type="Proteomes" id="UP000001020">
    <property type="component" value="Chromosome"/>
</dbReference>
<dbReference type="GO" id="GO:0050660">
    <property type="term" value="F:flavin adenine dinucleotide binding"/>
    <property type="evidence" value="ECO:0007669"/>
    <property type="project" value="InterPro"/>
</dbReference>
<dbReference type="GO" id="GO:0016614">
    <property type="term" value="F:oxidoreductase activity, acting on CH-OH group of donors"/>
    <property type="evidence" value="ECO:0007669"/>
    <property type="project" value="InterPro"/>
</dbReference>
<dbReference type="Gene3D" id="3.50.50.60">
    <property type="entry name" value="FAD/NAD(P)-binding domain"/>
    <property type="match status" value="2"/>
</dbReference>
<dbReference type="InterPro" id="IPR036188">
    <property type="entry name" value="FAD/NAD-bd_sf"/>
</dbReference>
<dbReference type="InterPro" id="IPR000172">
    <property type="entry name" value="GMC_OxRdtase_N"/>
</dbReference>
<dbReference type="InterPro" id="IPR007867">
    <property type="entry name" value="GMC_OxRtase_C"/>
</dbReference>
<dbReference type="PANTHER" id="PTHR46056">
    <property type="entry name" value="LONG-CHAIN-ALCOHOL OXIDASE"/>
    <property type="match status" value="1"/>
</dbReference>
<dbReference type="PANTHER" id="PTHR46056:SF12">
    <property type="entry name" value="LONG-CHAIN-ALCOHOL OXIDASE"/>
    <property type="match status" value="1"/>
</dbReference>
<dbReference type="Pfam" id="PF05199">
    <property type="entry name" value="GMC_oxred_C"/>
    <property type="match status" value="1"/>
</dbReference>
<dbReference type="Pfam" id="PF00732">
    <property type="entry name" value="GMC_oxred_N"/>
    <property type="match status" value="1"/>
</dbReference>
<dbReference type="Pfam" id="PF13450">
    <property type="entry name" value="NAD_binding_8"/>
    <property type="match status" value="1"/>
</dbReference>
<dbReference type="SUPFAM" id="SSF51905">
    <property type="entry name" value="FAD/NAD(P)-binding domain"/>
    <property type="match status" value="1"/>
</dbReference>
<dbReference type="PROSITE" id="PS00624">
    <property type="entry name" value="GMC_OXRED_2"/>
    <property type="match status" value="1"/>
</dbReference>
<gene>
    <name type="ordered locus">MT0511/MT0512</name>
</gene>
<protein>
    <recommendedName>
        <fullName>Uncharacterized GMC-type oxidoreductase MT0511/MT0512</fullName>
        <ecNumber>1.1.-.-</ecNumber>
    </recommendedName>
</protein>
<sequence length="629" mass="66154">MSRLADRAKSYPLASFGAALLPPELGGPLPAQFVQRVDRYVTRLPATSRFAVRAGLASLAAASYLTTGRSLPRLHPDERARVLHRIAALSPEVAAAVEGLKAIVLLANGADTYAHELLARAQEHDAARPDAELTVILSADSPSVTRADAVVVGSGAGGAMVARTLARAGLDVVVLEEGRRWTVEEFRSTHPVDRYAGLYRGAGATVALGRPAVVLPMGRAVGGTTVVNSGTCFRPSLAVQRRWRDEFGLGLADPDQLGRRLDDAEQTLRVAPVPLEIMGRNGRLLLQAAKSLGWRAAPIPRNAPGCRGCCQCAIGCPSNAKFGVHLNALPQACAAGARIISWARVERILHRAGRAYGVRARRPDGTTLDVLADAVVVAAGATETPGLLRRSGLGGHPRLGHNLALHPATMLAGLFDDDVFAWRGVLQSAAVHEFHESDGVLIEATSTPPGMGSMVFPGYGAELLRWLDRAPQIATFGAMVADRGVGTVRSVRGETVVRYDIAPGEIAKLRVALQAIGRLLFAAGAVEVLTGIPGAPPMRSLPELQDVLRRANPRSLHLAAFHPTGTAAAGADEQLCPVDATGRLRGVEGVWVADASILPSCPEVNPQLSIMAMALAVADQTVAKVVGVR</sequence>
<comment type="cofactor">
    <cofactor evidence="1">
        <name>FAD</name>
        <dbReference type="ChEBI" id="CHEBI:57692"/>
    </cofactor>
</comment>
<comment type="similarity">
    <text evidence="3">Belongs to the GMC oxidoreductase family.</text>
</comment>
<comment type="sequence caution" evidence="3">
    <conflict type="frameshift">
        <sequence resource="EMBL-CDS" id="AAK44735"/>
    </conflict>
</comment>
<keyword id="KW-0274">FAD</keyword>
<keyword id="KW-0285">Flavoprotein</keyword>
<keyword id="KW-0560">Oxidoreductase</keyword>
<keyword id="KW-1185">Reference proteome</keyword>
<feature type="chain" id="PRO_0000427235" description="Uncharacterized GMC-type oxidoreductase MT0511/MT0512">
    <location>
        <begin position="1"/>
        <end position="629"/>
    </location>
</feature>
<feature type="active site" description="Proton acceptor" evidence="2">
    <location>
        <position position="562"/>
    </location>
</feature>
<organism>
    <name type="scientific">Mycobacterium tuberculosis (strain CDC 1551 / Oshkosh)</name>
    <dbReference type="NCBI Taxonomy" id="83331"/>
    <lineage>
        <taxon>Bacteria</taxon>
        <taxon>Bacillati</taxon>
        <taxon>Actinomycetota</taxon>
        <taxon>Actinomycetes</taxon>
        <taxon>Mycobacteriales</taxon>
        <taxon>Mycobacteriaceae</taxon>
        <taxon>Mycobacterium</taxon>
        <taxon>Mycobacterium tuberculosis complex</taxon>
    </lineage>
</organism>
<reference key="1">
    <citation type="journal article" date="2002" name="J. Bacteriol.">
        <title>Whole-genome comparison of Mycobacterium tuberculosis clinical and laboratory strains.</title>
        <authorList>
            <person name="Fleischmann R.D."/>
            <person name="Alland D."/>
            <person name="Eisen J.A."/>
            <person name="Carpenter L."/>
            <person name="White O."/>
            <person name="Peterson J.D."/>
            <person name="DeBoy R.T."/>
            <person name="Dodson R.J."/>
            <person name="Gwinn M.L."/>
            <person name="Haft D.H."/>
            <person name="Hickey E.K."/>
            <person name="Kolonay J.F."/>
            <person name="Nelson W.C."/>
            <person name="Umayam L.A."/>
            <person name="Ermolaeva M.D."/>
            <person name="Salzberg S.L."/>
            <person name="Delcher A."/>
            <person name="Utterback T.R."/>
            <person name="Weidman J.F."/>
            <person name="Khouri H.M."/>
            <person name="Gill J."/>
            <person name="Mikula A."/>
            <person name="Bishai W."/>
            <person name="Jacobs W.R. Jr."/>
            <person name="Venter J.C."/>
            <person name="Fraser C.M."/>
        </authorList>
    </citation>
    <scope>NUCLEOTIDE SEQUENCE [LARGE SCALE GENOMIC DNA]</scope>
    <source>
        <strain>CDC 1551 / Oshkosh</strain>
    </source>
</reference>
<evidence type="ECO:0000250" key="1"/>
<evidence type="ECO:0000250" key="2">
    <source>
        <dbReference type="UniProtKB" id="E4QP00"/>
    </source>
</evidence>
<evidence type="ECO:0000305" key="3"/>
<name>Y492_MYCTO</name>
<proteinExistence type="inferred from homology"/>